<comment type="function">
    <text evidence="1">Catalyzes the irreversible NADPH-dependent deamination of GMP to IMP. It functions in the conversion of nucleobase, nucleoside and nucleotide derivatives of G to A nucleotides, and in maintaining the intracellular balance of A and G nucleotides.</text>
</comment>
<comment type="catalytic activity">
    <reaction evidence="1">
        <text>IMP + NH4(+) + NADP(+) = GMP + NADPH + 2 H(+)</text>
        <dbReference type="Rhea" id="RHEA:17185"/>
        <dbReference type="ChEBI" id="CHEBI:15378"/>
        <dbReference type="ChEBI" id="CHEBI:28938"/>
        <dbReference type="ChEBI" id="CHEBI:57783"/>
        <dbReference type="ChEBI" id="CHEBI:58053"/>
        <dbReference type="ChEBI" id="CHEBI:58115"/>
        <dbReference type="ChEBI" id="CHEBI:58349"/>
        <dbReference type="EC" id="1.7.1.7"/>
    </reaction>
</comment>
<comment type="subunit">
    <text evidence="1">Homotetramer.</text>
</comment>
<comment type="similarity">
    <text evidence="1">Belongs to the IMPDH/GMPR family. GuaC type 1 subfamily.</text>
</comment>
<reference key="1">
    <citation type="journal article" date="2008" name="BMC Genomics">
        <title>The genome of Aeromonas salmonicida subsp. salmonicida A449: insights into the evolution of a fish pathogen.</title>
        <authorList>
            <person name="Reith M.E."/>
            <person name="Singh R.K."/>
            <person name="Curtis B."/>
            <person name="Boyd J.M."/>
            <person name="Bouevitch A."/>
            <person name="Kimball J."/>
            <person name="Munholland J."/>
            <person name="Murphy C."/>
            <person name="Sarty D."/>
            <person name="Williams J."/>
            <person name="Nash J.H."/>
            <person name="Johnson S.C."/>
            <person name="Brown L.L."/>
        </authorList>
    </citation>
    <scope>NUCLEOTIDE SEQUENCE [LARGE SCALE GENOMIC DNA]</scope>
    <source>
        <strain>A449</strain>
    </source>
</reference>
<organism>
    <name type="scientific">Aeromonas salmonicida (strain A449)</name>
    <dbReference type="NCBI Taxonomy" id="382245"/>
    <lineage>
        <taxon>Bacteria</taxon>
        <taxon>Pseudomonadati</taxon>
        <taxon>Pseudomonadota</taxon>
        <taxon>Gammaproteobacteria</taxon>
        <taxon>Aeromonadales</taxon>
        <taxon>Aeromonadaceae</taxon>
        <taxon>Aeromonas</taxon>
    </lineage>
</organism>
<protein>
    <recommendedName>
        <fullName evidence="1">GMP reductase</fullName>
        <ecNumber evidence="1">1.7.1.7</ecNumber>
    </recommendedName>
    <alternativeName>
        <fullName evidence="1">Guanosine 5'-monophosphate oxidoreductase</fullName>
        <shortName evidence="1">Guanosine monophosphate reductase</shortName>
    </alternativeName>
</protein>
<feature type="chain" id="PRO_1000025609" description="GMP reductase">
    <location>
        <begin position="1"/>
        <end position="347"/>
    </location>
</feature>
<feature type="active site" description="Thioimidate intermediate" evidence="1">
    <location>
        <position position="186"/>
    </location>
</feature>
<feature type="binding site" evidence="1">
    <location>
        <begin position="108"/>
        <end position="131"/>
    </location>
    <ligand>
        <name>NADP(+)</name>
        <dbReference type="ChEBI" id="CHEBI:58349"/>
    </ligand>
</feature>
<feature type="binding site" evidence="1">
    <location>
        <position position="181"/>
    </location>
    <ligand>
        <name>K(+)</name>
        <dbReference type="ChEBI" id="CHEBI:29103"/>
    </ligand>
</feature>
<feature type="binding site" evidence="1">
    <location>
        <position position="183"/>
    </location>
    <ligand>
        <name>K(+)</name>
        <dbReference type="ChEBI" id="CHEBI:29103"/>
    </ligand>
</feature>
<feature type="binding site" evidence="1">
    <location>
        <begin position="216"/>
        <end position="239"/>
    </location>
    <ligand>
        <name>NADP(+)</name>
        <dbReference type="ChEBI" id="CHEBI:58349"/>
    </ligand>
</feature>
<name>GUAC_AERS4</name>
<proteinExistence type="inferred from homology"/>
<sequence>MRIEEDLKLGFKDVLFRPKRSTLKSRSQLSLTRQFTFKHTQTQWQGVPVIAANMDTVGSFAMARTLAGFEMMTAVHKHYSLEQWQAFVNSTDPTLLGHVMVSTGTSEDDFTKTRQILAMSTALRFICVDVANGYSQHFVEFLRKIREACPNHVILAGNVVTGEMVEELILSGADIVKVGIGPGSVCTTRVKTGVGYPQLSAIIECADAAHGLGGQIVGDGGCTCPGDVAKAFGGGADFVMLGGMLAAHEECGGEVVDVDGTPFMKFYGMSSSSAMDKHAGGVADYRASEGKTVLLPYRGPVENTVRDILGGVRSTCTYVGASQLKELTKRTTFIRVREQENNVYGKE</sequence>
<accession>A4SJY8</accession>
<evidence type="ECO:0000255" key="1">
    <source>
        <dbReference type="HAMAP-Rule" id="MF_00596"/>
    </source>
</evidence>
<dbReference type="EC" id="1.7.1.7" evidence="1"/>
<dbReference type="EMBL" id="CP000644">
    <property type="protein sequence ID" value="ABO89210.1"/>
    <property type="molecule type" value="Genomic_DNA"/>
</dbReference>
<dbReference type="RefSeq" id="WP_005317265.1">
    <property type="nucleotide sequence ID" value="NC_009348.1"/>
</dbReference>
<dbReference type="SMR" id="A4SJY8"/>
<dbReference type="STRING" id="29491.GCA_000820065_02550"/>
<dbReference type="KEGG" id="asa:ASA_1088"/>
<dbReference type="PATRIC" id="fig|382245.13.peg.1084"/>
<dbReference type="eggNOG" id="COG0516">
    <property type="taxonomic scope" value="Bacteria"/>
</dbReference>
<dbReference type="HOGENOM" id="CLU_022552_5_3_6"/>
<dbReference type="Proteomes" id="UP000000225">
    <property type="component" value="Chromosome"/>
</dbReference>
<dbReference type="GO" id="GO:0005829">
    <property type="term" value="C:cytosol"/>
    <property type="evidence" value="ECO:0007669"/>
    <property type="project" value="TreeGrafter"/>
</dbReference>
<dbReference type="GO" id="GO:1902560">
    <property type="term" value="C:GMP reductase complex"/>
    <property type="evidence" value="ECO:0007669"/>
    <property type="project" value="InterPro"/>
</dbReference>
<dbReference type="GO" id="GO:0003920">
    <property type="term" value="F:GMP reductase activity"/>
    <property type="evidence" value="ECO:0007669"/>
    <property type="project" value="UniProtKB-UniRule"/>
</dbReference>
<dbReference type="GO" id="GO:0046872">
    <property type="term" value="F:metal ion binding"/>
    <property type="evidence" value="ECO:0007669"/>
    <property type="project" value="UniProtKB-KW"/>
</dbReference>
<dbReference type="GO" id="GO:0006163">
    <property type="term" value="P:purine nucleotide metabolic process"/>
    <property type="evidence" value="ECO:0007669"/>
    <property type="project" value="UniProtKB-UniRule"/>
</dbReference>
<dbReference type="CDD" id="cd00381">
    <property type="entry name" value="IMPDH"/>
    <property type="match status" value="1"/>
</dbReference>
<dbReference type="FunFam" id="3.20.20.70:FF:000012">
    <property type="entry name" value="GMP reductase"/>
    <property type="match status" value="1"/>
</dbReference>
<dbReference type="Gene3D" id="3.20.20.70">
    <property type="entry name" value="Aldolase class I"/>
    <property type="match status" value="1"/>
</dbReference>
<dbReference type="HAMAP" id="MF_00596">
    <property type="entry name" value="GMP_reduct_type1"/>
    <property type="match status" value="1"/>
</dbReference>
<dbReference type="InterPro" id="IPR013785">
    <property type="entry name" value="Aldolase_TIM"/>
</dbReference>
<dbReference type="InterPro" id="IPR050139">
    <property type="entry name" value="GMP_reductase"/>
</dbReference>
<dbReference type="InterPro" id="IPR005993">
    <property type="entry name" value="GMPR"/>
</dbReference>
<dbReference type="InterPro" id="IPR015875">
    <property type="entry name" value="IMP_DH/GMP_Rdtase_CS"/>
</dbReference>
<dbReference type="InterPro" id="IPR001093">
    <property type="entry name" value="IMP_DH_GMPRt"/>
</dbReference>
<dbReference type="NCBIfam" id="TIGR01305">
    <property type="entry name" value="GMP_reduct_1"/>
    <property type="match status" value="1"/>
</dbReference>
<dbReference type="NCBIfam" id="NF003470">
    <property type="entry name" value="PRK05096.1"/>
    <property type="match status" value="1"/>
</dbReference>
<dbReference type="PANTHER" id="PTHR43170">
    <property type="entry name" value="GMP REDUCTASE"/>
    <property type="match status" value="1"/>
</dbReference>
<dbReference type="PANTHER" id="PTHR43170:SF5">
    <property type="entry name" value="GMP REDUCTASE"/>
    <property type="match status" value="1"/>
</dbReference>
<dbReference type="Pfam" id="PF00478">
    <property type="entry name" value="IMPDH"/>
    <property type="match status" value="1"/>
</dbReference>
<dbReference type="PIRSF" id="PIRSF000235">
    <property type="entry name" value="GMP_reductase"/>
    <property type="match status" value="1"/>
</dbReference>
<dbReference type="SMART" id="SM01240">
    <property type="entry name" value="IMPDH"/>
    <property type="match status" value="1"/>
</dbReference>
<dbReference type="SUPFAM" id="SSF51412">
    <property type="entry name" value="Inosine monophosphate dehydrogenase (IMPDH)"/>
    <property type="match status" value="1"/>
</dbReference>
<dbReference type="PROSITE" id="PS00487">
    <property type="entry name" value="IMP_DH_GMP_RED"/>
    <property type="match status" value="1"/>
</dbReference>
<gene>
    <name evidence="1" type="primary">guaC</name>
    <name type="ordered locus">ASA_1088</name>
</gene>
<keyword id="KW-0479">Metal-binding</keyword>
<keyword id="KW-0521">NADP</keyword>
<keyword id="KW-0560">Oxidoreductase</keyword>
<keyword id="KW-0630">Potassium</keyword>